<feature type="chain" id="PRO_0000103477" description="Dihydroxy-acid dehydratase">
    <location>
        <begin position="1"/>
        <end position="564"/>
    </location>
</feature>
<feature type="active site" description="Proton acceptor" evidence="1">
    <location>
        <position position="473"/>
    </location>
</feature>
<feature type="binding site" evidence="1">
    <location>
        <position position="80"/>
    </location>
    <ligand>
        <name>Mg(2+)</name>
        <dbReference type="ChEBI" id="CHEBI:18420"/>
    </ligand>
</feature>
<feature type="binding site" evidence="1">
    <location>
        <position position="121"/>
    </location>
    <ligand>
        <name>[2Fe-2S] cluster</name>
        <dbReference type="ChEBI" id="CHEBI:190135"/>
    </ligand>
</feature>
<feature type="binding site" evidence="1">
    <location>
        <position position="122"/>
    </location>
    <ligand>
        <name>Mg(2+)</name>
        <dbReference type="ChEBI" id="CHEBI:18420"/>
    </ligand>
</feature>
<feature type="binding site" description="via carbamate group" evidence="1">
    <location>
        <position position="123"/>
    </location>
    <ligand>
        <name>Mg(2+)</name>
        <dbReference type="ChEBI" id="CHEBI:18420"/>
    </ligand>
</feature>
<feature type="binding site" evidence="1">
    <location>
        <position position="194"/>
    </location>
    <ligand>
        <name>[2Fe-2S] cluster</name>
        <dbReference type="ChEBI" id="CHEBI:190135"/>
    </ligand>
</feature>
<feature type="binding site" evidence="1">
    <location>
        <position position="447"/>
    </location>
    <ligand>
        <name>Mg(2+)</name>
        <dbReference type="ChEBI" id="CHEBI:18420"/>
    </ligand>
</feature>
<feature type="modified residue" description="N6-carboxylysine" evidence="1">
    <location>
        <position position="123"/>
    </location>
</feature>
<keyword id="KW-0001">2Fe-2S</keyword>
<keyword id="KW-0028">Amino-acid biosynthesis</keyword>
<keyword id="KW-0100">Branched-chain amino acid biosynthesis</keyword>
<keyword id="KW-0408">Iron</keyword>
<keyword id="KW-0411">Iron-sulfur</keyword>
<keyword id="KW-0456">Lyase</keyword>
<keyword id="KW-0460">Magnesium</keyword>
<keyword id="KW-0479">Metal-binding</keyword>
<comment type="function">
    <text evidence="1">Functions in the biosynthesis of branched-chain amino acids. Catalyzes the dehydration of (2R,3R)-2,3-dihydroxy-3-methylpentanoate (2,3-dihydroxy-3-methylvalerate) into 2-oxo-3-methylpentanoate (2-oxo-3-methylvalerate) and of (2R)-2,3-dihydroxy-3-methylbutanoate (2,3-dihydroxyisovalerate) into 2-oxo-3-methylbutanoate (2-oxoisovalerate), the penultimate precursor to L-isoleucine and L-valine, respectively.</text>
</comment>
<comment type="catalytic activity">
    <reaction evidence="1">
        <text>(2R)-2,3-dihydroxy-3-methylbutanoate = 3-methyl-2-oxobutanoate + H2O</text>
        <dbReference type="Rhea" id="RHEA:24809"/>
        <dbReference type="ChEBI" id="CHEBI:11851"/>
        <dbReference type="ChEBI" id="CHEBI:15377"/>
        <dbReference type="ChEBI" id="CHEBI:49072"/>
        <dbReference type="EC" id="4.2.1.9"/>
    </reaction>
    <physiologicalReaction direction="left-to-right" evidence="1">
        <dbReference type="Rhea" id="RHEA:24810"/>
    </physiologicalReaction>
</comment>
<comment type="catalytic activity">
    <reaction evidence="1">
        <text>(2R,3R)-2,3-dihydroxy-3-methylpentanoate = (S)-3-methyl-2-oxopentanoate + H2O</text>
        <dbReference type="Rhea" id="RHEA:27694"/>
        <dbReference type="ChEBI" id="CHEBI:15377"/>
        <dbReference type="ChEBI" id="CHEBI:35146"/>
        <dbReference type="ChEBI" id="CHEBI:49258"/>
        <dbReference type="EC" id="4.2.1.9"/>
    </reaction>
    <physiologicalReaction direction="left-to-right" evidence="1">
        <dbReference type="Rhea" id="RHEA:27695"/>
    </physiologicalReaction>
</comment>
<comment type="cofactor">
    <cofactor evidence="1">
        <name>[2Fe-2S] cluster</name>
        <dbReference type="ChEBI" id="CHEBI:190135"/>
    </cofactor>
    <text evidence="1">Binds 1 [2Fe-2S] cluster per subunit. This cluster acts as a Lewis acid cofactor.</text>
</comment>
<comment type="cofactor">
    <cofactor evidence="1">
        <name>Mg(2+)</name>
        <dbReference type="ChEBI" id="CHEBI:18420"/>
    </cofactor>
</comment>
<comment type="pathway">
    <text evidence="1">Amino-acid biosynthesis; L-isoleucine biosynthesis; L-isoleucine from 2-oxobutanoate: step 3/4.</text>
</comment>
<comment type="pathway">
    <text evidence="1">Amino-acid biosynthesis; L-valine biosynthesis; L-valine from pyruvate: step 3/4.</text>
</comment>
<comment type="subunit">
    <text evidence="1">Homodimer.</text>
</comment>
<comment type="similarity">
    <text evidence="1">Belongs to the IlvD/Edd family.</text>
</comment>
<name>ILVD_LISMF</name>
<organism>
    <name type="scientific">Listeria monocytogenes serotype 4b (strain F2365)</name>
    <dbReference type="NCBI Taxonomy" id="265669"/>
    <lineage>
        <taxon>Bacteria</taxon>
        <taxon>Bacillati</taxon>
        <taxon>Bacillota</taxon>
        <taxon>Bacilli</taxon>
        <taxon>Bacillales</taxon>
        <taxon>Listeriaceae</taxon>
        <taxon>Listeria</taxon>
    </lineage>
</organism>
<protein>
    <recommendedName>
        <fullName evidence="1">Dihydroxy-acid dehydratase</fullName>
        <shortName evidence="1">DAD</shortName>
        <ecNumber evidence="1">4.2.1.9</ecNumber>
    </recommendedName>
</protein>
<reference key="1">
    <citation type="journal article" date="2004" name="Nucleic Acids Res.">
        <title>Whole genome comparisons of serotype 4b and 1/2a strains of the food-borne pathogen Listeria monocytogenes reveal new insights into the core genome components of this species.</title>
        <authorList>
            <person name="Nelson K.E."/>
            <person name="Fouts D.E."/>
            <person name="Mongodin E.F."/>
            <person name="Ravel J."/>
            <person name="DeBoy R.T."/>
            <person name="Kolonay J.F."/>
            <person name="Rasko D.A."/>
            <person name="Angiuoli S.V."/>
            <person name="Gill S.R."/>
            <person name="Paulsen I.T."/>
            <person name="Peterson J.D."/>
            <person name="White O."/>
            <person name="Nelson W.C."/>
            <person name="Nierman W.C."/>
            <person name="Beanan M.J."/>
            <person name="Brinkac L.M."/>
            <person name="Daugherty S.C."/>
            <person name="Dodson R.J."/>
            <person name="Durkin A.S."/>
            <person name="Madupu R."/>
            <person name="Haft D.H."/>
            <person name="Selengut J."/>
            <person name="Van Aken S.E."/>
            <person name="Khouri H.M."/>
            <person name="Fedorova N."/>
            <person name="Forberger H.A."/>
            <person name="Tran B."/>
            <person name="Kathariou S."/>
            <person name="Wonderling L.D."/>
            <person name="Uhlich G.A."/>
            <person name="Bayles D.O."/>
            <person name="Luchansky J.B."/>
            <person name="Fraser C.M."/>
        </authorList>
    </citation>
    <scope>NUCLEOTIDE SEQUENCE [LARGE SCALE GENOMIC DNA]</scope>
    <source>
        <strain>F2365</strain>
    </source>
</reference>
<dbReference type="EC" id="4.2.1.9" evidence="1"/>
<dbReference type="EMBL" id="AE017262">
    <property type="protein sequence ID" value="AAT04776.1"/>
    <property type="molecule type" value="Genomic_DNA"/>
</dbReference>
<dbReference type="RefSeq" id="WP_003725873.1">
    <property type="nucleotide sequence ID" value="NC_002973.6"/>
</dbReference>
<dbReference type="SMR" id="Q71Y38"/>
<dbReference type="KEGG" id="lmf:LMOf2365_2006"/>
<dbReference type="HOGENOM" id="CLU_014271_4_2_9"/>
<dbReference type="UniPathway" id="UPA00047">
    <property type="reaction ID" value="UER00057"/>
</dbReference>
<dbReference type="UniPathway" id="UPA00049">
    <property type="reaction ID" value="UER00061"/>
</dbReference>
<dbReference type="GO" id="GO:0005829">
    <property type="term" value="C:cytosol"/>
    <property type="evidence" value="ECO:0007669"/>
    <property type="project" value="TreeGrafter"/>
</dbReference>
<dbReference type="GO" id="GO:0051537">
    <property type="term" value="F:2 iron, 2 sulfur cluster binding"/>
    <property type="evidence" value="ECO:0007669"/>
    <property type="project" value="UniProtKB-UniRule"/>
</dbReference>
<dbReference type="GO" id="GO:0004160">
    <property type="term" value="F:dihydroxy-acid dehydratase activity"/>
    <property type="evidence" value="ECO:0007669"/>
    <property type="project" value="UniProtKB-UniRule"/>
</dbReference>
<dbReference type="GO" id="GO:0000287">
    <property type="term" value="F:magnesium ion binding"/>
    <property type="evidence" value="ECO:0007669"/>
    <property type="project" value="UniProtKB-UniRule"/>
</dbReference>
<dbReference type="GO" id="GO:0009097">
    <property type="term" value="P:isoleucine biosynthetic process"/>
    <property type="evidence" value="ECO:0007669"/>
    <property type="project" value="UniProtKB-UniRule"/>
</dbReference>
<dbReference type="GO" id="GO:0009099">
    <property type="term" value="P:L-valine biosynthetic process"/>
    <property type="evidence" value="ECO:0007669"/>
    <property type="project" value="UniProtKB-UniRule"/>
</dbReference>
<dbReference type="FunFam" id="3.50.30.80:FF:000001">
    <property type="entry name" value="Dihydroxy-acid dehydratase"/>
    <property type="match status" value="1"/>
</dbReference>
<dbReference type="Gene3D" id="3.50.30.80">
    <property type="entry name" value="IlvD/EDD C-terminal domain-like"/>
    <property type="match status" value="1"/>
</dbReference>
<dbReference type="HAMAP" id="MF_00012">
    <property type="entry name" value="IlvD"/>
    <property type="match status" value="1"/>
</dbReference>
<dbReference type="InterPro" id="IPR042096">
    <property type="entry name" value="Dihydro-acid_dehy_C"/>
</dbReference>
<dbReference type="InterPro" id="IPR004404">
    <property type="entry name" value="DihydroxyA_deHydtase"/>
</dbReference>
<dbReference type="InterPro" id="IPR020558">
    <property type="entry name" value="DiOHA_6PGluconate_deHydtase_CS"/>
</dbReference>
<dbReference type="InterPro" id="IPR056740">
    <property type="entry name" value="ILV_EDD_C"/>
</dbReference>
<dbReference type="InterPro" id="IPR000581">
    <property type="entry name" value="ILV_EDD_N"/>
</dbReference>
<dbReference type="InterPro" id="IPR037237">
    <property type="entry name" value="IlvD/EDD_N"/>
</dbReference>
<dbReference type="NCBIfam" id="TIGR00110">
    <property type="entry name" value="ilvD"/>
    <property type="match status" value="1"/>
</dbReference>
<dbReference type="NCBIfam" id="NF002068">
    <property type="entry name" value="PRK00911.1"/>
    <property type="match status" value="1"/>
</dbReference>
<dbReference type="PANTHER" id="PTHR43661">
    <property type="entry name" value="D-XYLONATE DEHYDRATASE"/>
    <property type="match status" value="1"/>
</dbReference>
<dbReference type="PANTHER" id="PTHR43661:SF3">
    <property type="entry name" value="D-XYLONATE DEHYDRATASE YAGF-RELATED"/>
    <property type="match status" value="1"/>
</dbReference>
<dbReference type="Pfam" id="PF24877">
    <property type="entry name" value="ILV_EDD_C"/>
    <property type="match status" value="1"/>
</dbReference>
<dbReference type="Pfam" id="PF00920">
    <property type="entry name" value="ILVD_EDD_N"/>
    <property type="match status" value="1"/>
</dbReference>
<dbReference type="SUPFAM" id="SSF143975">
    <property type="entry name" value="IlvD/EDD N-terminal domain-like"/>
    <property type="match status" value="1"/>
</dbReference>
<dbReference type="SUPFAM" id="SSF52016">
    <property type="entry name" value="LeuD/IlvD-like"/>
    <property type="match status" value="1"/>
</dbReference>
<dbReference type="PROSITE" id="PS00886">
    <property type="entry name" value="ILVD_EDD_1"/>
    <property type="match status" value="1"/>
</dbReference>
<dbReference type="PROSITE" id="PS00887">
    <property type="entry name" value="ILVD_EDD_2"/>
    <property type="match status" value="1"/>
</dbReference>
<proteinExistence type="inferred from homology"/>
<gene>
    <name evidence="1" type="primary">ilvD</name>
    <name type="ordered locus">LMOf2365_2006</name>
</gene>
<sequence length="564" mass="59864">MRSDKIKKGVEQAPARSLLHATGQIKSPGDMDKPFIAICNSYIDIVPGHVHLRELADVAKEAIREAGGIPFEFNTIGVDDGIAMGHIGMRYSLPSREVIADAAETVINAHWFDGVFYIPNCDKITPGMLLASVRTNVPAIFCSGGPMKAGLSAHGKALTLSSVFEAVGAFKDGSMSQEDFLDMEANACPTCGSCAGMFTANSMNCLMEILGMAVPGNGTTLAVSDARRDLIRESAFHLMDLVKKDIRPRDIITKDAIDDAFALDMAMGGSTNTVLHTLALANEAGIEDYDLERINDIAKRVPYLSKIAPSSSYSMHDVHEAGGVSAIVKELVDLGGAIHPDRITVTGKTIRENVADAKINNTDVIHPKENPYSPVGGLSMLFGNIAPKGAAIKVGGVDPSVQVFKGEAICFSSHDEAVEAIDNHTVREGHVVVIRYEGPKGGPGMPEMLAPTSSIVGRGLGKDVALITDGRFSGATRGIAVGHISPEAAAGGPIALVHDGDIITIDLPNRTLNVDVSDEVLEERRKELPKFKAKVKTGYLARYTALVTSAHTGGILQIPEDLID</sequence>
<accession>Q71Y38</accession>
<evidence type="ECO:0000255" key="1">
    <source>
        <dbReference type="HAMAP-Rule" id="MF_00012"/>
    </source>
</evidence>